<proteinExistence type="inferred from homology"/>
<reference key="1">
    <citation type="journal article" date="2007" name="J. Bacteriol.">
        <title>Genome sequence and analysis of the soil cellulolytic actinomycete Thermobifida fusca YX.</title>
        <authorList>
            <person name="Lykidis A."/>
            <person name="Mavromatis K."/>
            <person name="Ivanova N."/>
            <person name="Anderson I."/>
            <person name="Land M."/>
            <person name="DiBartolo G."/>
            <person name="Martinez M."/>
            <person name="Lapidus A."/>
            <person name="Lucas S."/>
            <person name="Copeland A."/>
            <person name="Richardson P."/>
            <person name="Wilson D.B."/>
            <person name="Kyrpides N."/>
        </authorList>
    </citation>
    <scope>NUCLEOTIDE SEQUENCE [LARGE SCALE GENOMIC DNA]</scope>
    <source>
        <strain>YX</strain>
    </source>
</reference>
<comment type="function">
    <text evidence="1">Allows the formation of correctly charged Asn-tRNA(Asn) or Gln-tRNA(Gln) through the transamidation of misacylated Asp-tRNA(Asn) or Glu-tRNA(Gln) in organisms which lack either or both of asparaginyl-tRNA or glutaminyl-tRNA synthetases. The reaction takes place in the presence of glutamine and ATP through an activated phospho-Asp-tRNA(Asn) or phospho-Glu-tRNA(Gln).</text>
</comment>
<comment type="catalytic activity">
    <reaction evidence="1">
        <text>L-glutamyl-tRNA(Gln) + L-glutamine + ATP + H2O = L-glutaminyl-tRNA(Gln) + L-glutamate + ADP + phosphate + H(+)</text>
        <dbReference type="Rhea" id="RHEA:17521"/>
        <dbReference type="Rhea" id="RHEA-COMP:9681"/>
        <dbReference type="Rhea" id="RHEA-COMP:9684"/>
        <dbReference type="ChEBI" id="CHEBI:15377"/>
        <dbReference type="ChEBI" id="CHEBI:15378"/>
        <dbReference type="ChEBI" id="CHEBI:29985"/>
        <dbReference type="ChEBI" id="CHEBI:30616"/>
        <dbReference type="ChEBI" id="CHEBI:43474"/>
        <dbReference type="ChEBI" id="CHEBI:58359"/>
        <dbReference type="ChEBI" id="CHEBI:78520"/>
        <dbReference type="ChEBI" id="CHEBI:78521"/>
        <dbReference type="ChEBI" id="CHEBI:456216"/>
    </reaction>
</comment>
<comment type="catalytic activity">
    <reaction evidence="1">
        <text>L-aspartyl-tRNA(Asn) + L-glutamine + ATP + H2O = L-asparaginyl-tRNA(Asn) + L-glutamate + ADP + phosphate + 2 H(+)</text>
        <dbReference type="Rhea" id="RHEA:14513"/>
        <dbReference type="Rhea" id="RHEA-COMP:9674"/>
        <dbReference type="Rhea" id="RHEA-COMP:9677"/>
        <dbReference type="ChEBI" id="CHEBI:15377"/>
        <dbReference type="ChEBI" id="CHEBI:15378"/>
        <dbReference type="ChEBI" id="CHEBI:29985"/>
        <dbReference type="ChEBI" id="CHEBI:30616"/>
        <dbReference type="ChEBI" id="CHEBI:43474"/>
        <dbReference type="ChEBI" id="CHEBI:58359"/>
        <dbReference type="ChEBI" id="CHEBI:78515"/>
        <dbReference type="ChEBI" id="CHEBI:78516"/>
        <dbReference type="ChEBI" id="CHEBI:456216"/>
    </reaction>
</comment>
<comment type="subunit">
    <text evidence="1">Heterotrimer of A, B and C subunits.</text>
</comment>
<comment type="similarity">
    <text evidence="1">Belongs to the GatB/GatE family. GatB subfamily.</text>
</comment>
<dbReference type="EC" id="6.3.5.-" evidence="1"/>
<dbReference type="EMBL" id="CP000088">
    <property type="protein sequence ID" value="AAZ54647.1"/>
    <property type="molecule type" value="Genomic_DNA"/>
</dbReference>
<dbReference type="RefSeq" id="WP_011291056.1">
    <property type="nucleotide sequence ID" value="NC_007333.1"/>
</dbReference>
<dbReference type="SMR" id="Q47SC0"/>
<dbReference type="STRING" id="269800.Tfu_0609"/>
<dbReference type="KEGG" id="tfu:Tfu_0609"/>
<dbReference type="eggNOG" id="COG0064">
    <property type="taxonomic scope" value="Bacteria"/>
</dbReference>
<dbReference type="HOGENOM" id="CLU_019240_0_0_11"/>
<dbReference type="OrthoDB" id="9804078at2"/>
<dbReference type="GO" id="GO:0050566">
    <property type="term" value="F:asparaginyl-tRNA synthase (glutamine-hydrolyzing) activity"/>
    <property type="evidence" value="ECO:0007669"/>
    <property type="project" value="RHEA"/>
</dbReference>
<dbReference type="GO" id="GO:0005524">
    <property type="term" value="F:ATP binding"/>
    <property type="evidence" value="ECO:0007669"/>
    <property type="project" value="UniProtKB-KW"/>
</dbReference>
<dbReference type="GO" id="GO:0050567">
    <property type="term" value="F:glutaminyl-tRNA synthase (glutamine-hydrolyzing) activity"/>
    <property type="evidence" value="ECO:0007669"/>
    <property type="project" value="UniProtKB-UniRule"/>
</dbReference>
<dbReference type="GO" id="GO:0070681">
    <property type="term" value="P:glutaminyl-tRNAGln biosynthesis via transamidation"/>
    <property type="evidence" value="ECO:0007669"/>
    <property type="project" value="TreeGrafter"/>
</dbReference>
<dbReference type="GO" id="GO:0006412">
    <property type="term" value="P:translation"/>
    <property type="evidence" value="ECO:0007669"/>
    <property type="project" value="UniProtKB-UniRule"/>
</dbReference>
<dbReference type="FunFam" id="1.10.10.410:FF:000001">
    <property type="entry name" value="Aspartyl/glutamyl-tRNA(Asn/Gln) amidotransferase subunit B"/>
    <property type="match status" value="1"/>
</dbReference>
<dbReference type="Gene3D" id="1.10.10.410">
    <property type="match status" value="1"/>
</dbReference>
<dbReference type="HAMAP" id="MF_00121">
    <property type="entry name" value="GatB"/>
    <property type="match status" value="1"/>
</dbReference>
<dbReference type="InterPro" id="IPR017959">
    <property type="entry name" value="Asn/Gln-tRNA_amidoTrfase_suB/E"/>
</dbReference>
<dbReference type="InterPro" id="IPR006075">
    <property type="entry name" value="Asn/Gln-tRNA_Trfase_suB/E_cat"/>
</dbReference>
<dbReference type="InterPro" id="IPR018027">
    <property type="entry name" value="Asn/Gln_amidotransferase"/>
</dbReference>
<dbReference type="InterPro" id="IPR003789">
    <property type="entry name" value="Asn/Gln_tRNA_amidoTrase-B-like"/>
</dbReference>
<dbReference type="InterPro" id="IPR004413">
    <property type="entry name" value="GatB"/>
</dbReference>
<dbReference type="InterPro" id="IPR023168">
    <property type="entry name" value="GatB_Yqey_C_2"/>
</dbReference>
<dbReference type="InterPro" id="IPR017958">
    <property type="entry name" value="Gln-tRNA_amidoTrfase_suB_CS"/>
</dbReference>
<dbReference type="InterPro" id="IPR014746">
    <property type="entry name" value="Gln_synth/guanido_kin_cat_dom"/>
</dbReference>
<dbReference type="NCBIfam" id="TIGR00133">
    <property type="entry name" value="gatB"/>
    <property type="match status" value="1"/>
</dbReference>
<dbReference type="NCBIfam" id="NF004012">
    <property type="entry name" value="PRK05477.1-2"/>
    <property type="match status" value="1"/>
</dbReference>
<dbReference type="NCBIfam" id="NF004013">
    <property type="entry name" value="PRK05477.1-3"/>
    <property type="match status" value="1"/>
</dbReference>
<dbReference type="NCBIfam" id="NF004014">
    <property type="entry name" value="PRK05477.1-4"/>
    <property type="match status" value="1"/>
</dbReference>
<dbReference type="PANTHER" id="PTHR11659">
    <property type="entry name" value="GLUTAMYL-TRNA GLN AMIDOTRANSFERASE SUBUNIT B MITOCHONDRIAL AND PROKARYOTIC PET112-RELATED"/>
    <property type="match status" value="1"/>
</dbReference>
<dbReference type="PANTHER" id="PTHR11659:SF0">
    <property type="entry name" value="GLUTAMYL-TRNA(GLN) AMIDOTRANSFERASE SUBUNIT B, MITOCHONDRIAL"/>
    <property type="match status" value="1"/>
</dbReference>
<dbReference type="Pfam" id="PF02934">
    <property type="entry name" value="GatB_N"/>
    <property type="match status" value="1"/>
</dbReference>
<dbReference type="Pfam" id="PF02637">
    <property type="entry name" value="GatB_Yqey"/>
    <property type="match status" value="1"/>
</dbReference>
<dbReference type="SMART" id="SM00845">
    <property type="entry name" value="GatB_Yqey"/>
    <property type="match status" value="1"/>
</dbReference>
<dbReference type="SUPFAM" id="SSF89095">
    <property type="entry name" value="GatB/YqeY motif"/>
    <property type="match status" value="1"/>
</dbReference>
<dbReference type="SUPFAM" id="SSF55931">
    <property type="entry name" value="Glutamine synthetase/guanido kinase"/>
    <property type="match status" value="1"/>
</dbReference>
<dbReference type="PROSITE" id="PS01234">
    <property type="entry name" value="GATB"/>
    <property type="match status" value="1"/>
</dbReference>
<name>GATB_THEFY</name>
<evidence type="ECO:0000255" key="1">
    <source>
        <dbReference type="HAMAP-Rule" id="MF_00121"/>
    </source>
</evidence>
<sequence length="517" mass="56206">MGSAVTSDHSAKGGATALMPYDEVLRGYEPVLGLETHVELGTRSKMFCSCATTFGAEPNTQVCPVCLALPGALPVVNSAAVESAIRLGLALNCSIAEWCRFARKNYFYPDMPKNYQISQYDEPLCYDGYLDVTVDTPEGPREFRIGIERVHMEEDTGKTSHVGGADGRIHGAEYSTVDYNRAGIPLLEIVTKPIEDAGEWAPQVARAYVRELRDLIRALGISDVRMEEGSLRCDVNVSLKPRGSTEWGTRTETKNVNSLRSIERAVRHEIERQGGVLSAGGRVVQETRHFQESTGTTVAGRSKEEAQDYRYFPDPDLVPVAPDREWVEQLRATLPELPSAKRRRLKAEWNLTDKELQDLVNANAVDLVEQTVAAGAPPAEARKWWLNDLSRRATETGVELSELPITPAQVARVVELVAEGSLTNKLARQVVDGVLAGEGEPDEVVEARGLRVVSDDAALGAIVDQAIANNADAAEKVRNGKIAAVGALVGAVMRETKGQADAGRARQLILERLGVSG</sequence>
<keyword id="KW-0067">ATP-binding</keyword>
<keyword id="KW-0436">Ligase</keyword>
<keyword id="KW-0547">Nucleotide-binding</keyword>
<keyword id="KW-0648">Protein biosynthesis</keyword>
<organism>
    <name type="scientific">Thermobifida fusca (strain YX)</name>
    <dbReference type="NCBI Taxonomy" id="269800"/>
    <lineage>
        <taxon>Bacteria</taxon>
        <taxon>Bacillati</taxon>
        <taxon>Actinomycetota</taxon>
        <taxon>Actinomycetes</taxon>
        <taxon>Streptosporangiales</taxon>
        <taxon>Nocardiopsidaceae</taxon>
        <taxon>Thermobifida</taxon>
    </lineage>
</organism>
<feature type="chain" id="PRO_0000241293" description="Aspartyl/glutamyl-tRNA(Asn/Gln) amidotransferase subunit B">
    <location>
        <begin position="1"/>
        <end position="517"/>
    </location>
</feature>
<protein>
    <recommendedName>
        <fullName evidence="1">Aspartyl/glutamyl-tRNA(Asn/Gln) amidotransferase subunit B</fullName>
        <shortName evidence="1">Asp/Glu-ADT subunit B</shortName>
        <ecNumber evidence="1">6.3.5.-</ecNumber>
    </recommendedName>
</protein>
<gene>
    <name evidence="1" type="primary">gatB</name>
    <name type="ordered locus">Tfu_0609</name>
</gene>
<accession>Q47SC0</accession>